<comment type="function">
    <text evidence="1 2">Catalyzes the cleavage of cystathionine to homocysteine, pyruvate and ammonia during methionine biosynthesis (By similarity). Also has cytotoxic activity toward osteogenic, osteosarcoma and tracheal cells, in vitro. The chemical basis for cell toxicity might be the formation and subsequent transfer of sulfane-sulfur to proteins, derived via beta-cystathionase cleavage of L-cystine (PubMed:8463265).</text>
</comment>
<comment type="catalytic activity">
    <reaction evidence="1">
        <text>L,L-cystathionine + H2O = L-homocysteine + pyruvate + NH4(+)</text>
        <dbReference type="Rhea" id="RHEA:13965"/>
        <dbReference type="ChEBI" id="CHEBI:15361"/>
        <dbReference type="ChEBI" id="CHEBI:15377"/>
        <dbReference type="ChEBI" id="CHEBI:28938"/>
        <dbReference type="ChEBI" id="CHEBI:58161"/>
        <dbReference type="ChEBI" id="CHEBI:58199"/>
    </reaction>
</comment>
<comment type="catalytic activity">
    <reaction evidence="1">
        <text>an S-substituted L-cysteine + H2O = a thiol + pyruvate + NH4(+)</text>
        <dbReference type="Rhea" id="RHEA:18121"/>
        <dbReference type="ChEBI" id="CHEBI:15361"/>
        <dbReference type="ChEBI" id="CHEBI:15377"/>
        <dbReference type="ChEBI" id="CHEBI:28938"/>
        <dbReference type="ChEBI" id="CHEBI:29256"/>
        <dbReference type="ChEBI" id="CHEBI:58717"/>
        <dbReference type="EC" id="4.4.1.13"/>
    </reaction>
</comment>
<comment type="cofactor">
    <cofactor evidence="1">
        <name>pyridoxal 5'-phosphate</name>
        <dbReference type="ChEBI" id="CHEBI:597326"/>
    </cofactor>
</comment>
<comment type="pathway">
    <text evidence="1">Amino-acid biosynthesis; L-methionine biosynthesis via de novo pathway; L-homocysteine from L-cystathionine: step 1/1.</text>
</comment>
<comment type="subunit">
    <text>Homodimer.</text>
</comment>
<comment type="subcellular location">
    <subcellularLocation>
        <location evidence="1">Cytoplasm</location>
    </subcellularLocation>
</comment>
<comment type="similarity">
    <text evidence="3">Belongs to the trans-sulfuration enzymes family.</text>
</comment>
<dbReference type="EC" id="4.4.1.13" evidence="1"/>
<dbReference type="EMBL" id="L10425">
    <property type="protein sequence ID" value="AAA22978.1"/>
    <property type="molecule type" value="Genomic_DNA"/>
</dbReference>
<dbReference type="PIR" id="A46084">
    <property type="entry name" value="A46084"/>
</dbReference>
<dbReference type="RefSeq" id="WP_012419002.1">
    <property type="nucleotide sequence ID" value="NZ_UFTG01000001.1"/>
</dbReference>
<dbReference type="SMR" id="Q07703"/>
<dbReference type="GeneID" id="92933374"/>
<dbReference type="OMA" id="CISGPDK"/>
<dbReference type="UniPathway" id="UPA00051">
    <property type="reaction ID" value="UER00078"/>
</dbReference>
<dbReference type="GO" id="GO:0005737">
    <property type="term" value="C:cytoplasm"/>
    <property type="evidence" value="ECO:0007669"/>
    <property type="project" value="UniProtKB-SubCell"/>
</dbReference>
<dbReference type="GO" id="GO:0047804">
    <property type="term" value="F:cysteine-S-conjugate beta-lyase activity"/>
    <property type="evidence" value="ECO:0007669"/>
    <property type="project" value="UniProtKB-EC"/>
</dbReference>
<dbReference type="GO" id="GO:0030170">
    <property type="term" value="F:pyridoxal phosphate binding"/>
    <property type="evidence" value="ECO:0007669"/>
    <property type="project" value="InterPro"/>
</dbReference>
<dbReference type="GO" id="GO:0019450">
    <property type="term" value="P:L-cysteine catabolic process to pyruvate"/>
    <property type="evidence" value="ECO:0007669"/>
    <property type="project" value="TreeGrafter"/>
</dbReference>
<dbReference type="GO" id="GO:0009086">
    <property type="term" value="P:methionine biosynthetic process"/>
    <property type="evidence" value="ECO:0007669"/>
    <property type="project" value="UniProtKB-KW"/>
</dbReference>
<dbReference type="GO" id="GO:0019346">
    <property type="term" value="P:transsulfuration"/>
    <property type="evidence" value="ECO:0007669"/>
    <property type="project" value="InterPro"/>
</dbReference>
<dbReference type="CDD" id="cd00614">
    <property type="entry name" value="CGS_like"/>
    <property type="match status" value="1"/>
</dbReference>
<dbReference type="FunFam" id="3.40.640.10:FF:000046">
    <property type="entry name" value="Cystathionine gamma-lyase"/>
    <property type="match status" value="1"/>
</dbReference>
<dbReference type="Gene3D" id="3.90.1150.10">
    <property type="entry name" value="Aspartate Aminotransferase, domain 1"/>
    <property type="match status" value="1"/>
</dbReference>
<dbReference type="Gene3D" id="3.40.640.10">
    <property type="entry name" value="Type I PLP-dependent aspartate aminotransferase-like (Major domain)"/>
    <property type="match status" value="1"/>
</dbReference>
<dbReference type="InterPro" id="IPR000277">
    <property type="entry name" value="Cys/Met-Metab_PyrdxlP-dep_enz"/>
</dbReference>
<dbReference type="InterPro" id="IPR006233">
    <property type="entry name" value="Cys_b_lyase_bac"/>
</dbReference>
<dbReference type="InterPro" id="IPR054542">
    <property type="entry name" value="Cys_met_metab_PP"/>
</dbReference>
<dbReference type="InterPro" id="IPR015424">
    <property type="entry name" value="PyrdxlP-dep_Trfase"/>
</dbReference>
<dbReference type="InterPro" id="IPR015421">
    <property type="entry name" value="PyrdxlP-dep_Trfase_major"/>
</dbReference>
<dbReference type="InterPro" id="IPR015422">
    <property type="entry name" value="PyrdxlP-dep_Trfase_small"/>
</dbReference>
<dbReference type="NCBIfam" id="TIGR01324">
    <property type="entry name" value="cysta_beta_ly_B"/>
    <property type="match status" value="1"/>
</dbReference>
<dbReference type="PANTHER" id="PTHR43500">
    <property type="entry name" value="CYSTATHIONINE BETA-LYASE-RELATED"/>
    <property type="match status" value="1"/>
</dbReference>
<dbReference type="PANTHER" id="PTHR43500:SF1">
    <property type="entry name" value="CYSTATHIONINE BETA-LYASE-RELATED"/>
    <property type="match status" value="1"/>
</dbReference>
<dbReference type="Pfam" id="PF01053">
    <property type="entry name" value="Cys_Met_Meta_PP"/>
    <property type="match status" value="1"/>
</dbReference>
<dbReference type="PIRSF" id="PIRSF001434">
    <property type="entry name" value="CGS"/>
    <property type="match status" value="1"/>
</dbReference>
<dbReference type="SUPFAM" id="SSF53383">
    <property type="entry name" value="PLP-dependent transferases"/>
    <property type="match status" value="1"/>
</dbReference>
<dbReference type="PROSITE" id="PS00868">
    <property type="entry name" value="CYS_MET_METAB_PP"/>
    <property type="match status" value="1"/>
</dbReference>
<organism>
    <name type="scientific">Bordetella avium</name>
    <dbReference type="NCBI Taxonomy" id="521"/>
    <lineage>
        <taxon>Bacteria</taxon>
        <taxon>Pseudomonadati</taxon>
        <taxon>Pseudomonadota</taxon>
        <taxon>Betaproteobacteria</taxon>
        <taxon>Burkholderiales</taxon>
        <taxon>Alcaligenaceae</taxon>
        <taxon>Bordetella</taxon>
    </lineage>
</organism>
<name>METC_BORAV</name>
<sequence length="396" mass="42610">MSDTSAKHIDTLLQHLGSAPFNPDTGAAPVNLPSVRASTVRFQSLAKLEDAQRRKAAGERASTYGRMGMDTHAALEQVFAELEGGTHCYLASSGLAGISMVFLSLLSAGEHALVADCAYGPVHELHEAVLSRLGIDVTFFDAKADLASLVRPTTRLIFAEAPGSLLFEMLDMPALARFAKQHDLILATDNTWGSGYIYRPLTLGAQVSVIAGTKYVGGHSDLMLGAVVTNDEAIAKRLNRTQYALGYSVSADDAWLALRGVRTMPVRMAQHARHALEVCEFLQNRPEVVRLYHPAWPADPGHALWQRDCSGSNGMLAVQLGLSPQAARDFVNALTLFGIGFSWGGFESLVQLVTPGELARHQYWQGGSDALVRLHIGLESPADLIADLAQALDRAA</sequence>
<gene>
    <name type="primary">metC</name>
</gene>
<keyword id="KW-0028">Amino-acid biosynthesis</keyword>
<keyword id="KW-0963">Cytoplasm</keyword>
<keyword id="KW-0903">Direct protein sequencing</keyword>
<keyword id="KW-0456">Lyase</keyword>
<keyword id="KW-0486">Methionine biosynthesis</keyword>
<keyword id="KW-0663">Pyridoxal phosphate</keyword>
<reference key="1">
    <citation type="journal article" date="1993" name="J. Biol. Chem.">
        <title>Toxicity of Bordetella avium beta-cystathionase toward MC3T3-E1 osteogenic cells.</title>
        <authorList>
            <person name="Gentry-Weeks C.R."/>
            <person name="Keith J.M."/>
            <person name="Thompson J."/>
        </authorList>
    </citation>
    <scope>NUCLEOTIDE SEQUENCE [GENOMIC DNA]</scope>
    <scope>PROTEIN SEQUENCE OF 2-33</scope>
    <scope>FUNCTION</scope>
    <source>
        <strain>197</strain>
    </source>
</reference>
<protein>
    <recommendedName>
        <fullName>Cystathionine beta-lyase</fullName>
        <shortName>CBL</shortName>
        <ecNumber evidence="1">4.4.1.13</ecNumber>
    </recommendedName>
    <alternativeName>
        <fullName>Beta-cystathionase</fullName>
    </alternativeName>
    <alternativeName>
        <fullName>Cysteine lyase</fullName>
    </alternativeName>
    <alternativeName>
        <fullName>Cysteine-S-conjugate beta-lyase</fullName>
    </alternativeName>
    <alternativeName>
        <fullName>Osteotoxin</fullName>
    </alternativeName>
</protein>
<accession>Q07703</accession>
<feature type="initiator methionine" description="Removed" evidence="2">
    <location>
        <position position="1"/>
    </location>
</feature>
<feature type="chain" id="PRO_0000114767" description="Cystathionine beta-lyase">
    <location>
        <begin position="2"/>
        <end position="396"/>
    </location>
</feature>
<feature type="modified residue" description="N6-(pyridoxal phosphate)lysine" evidence="1">
    <location>
        <position position="214"/>
    </location>
</feature>
<evidence type="ECO:0000250" key="1">
    <source>
        <dbReference type="UniProtKB" id="P06721"/>
    </source>
</evidence>
<evidence type="ECO:0000269" key="2">
    <source>
    </source>
</evidence>
<evidence type="ECO:0000305" key="3"/>
<proteinExistence type="evidence at protein level"/>